<organism>
    <name type="scientific">Rattus norvegicus</name>
    <name type="common">Rat</name>
    <dbReference type="NCBI Taxonomy" id="10116"/>
    <lineage>
        <taxon>Eukaryota</taxon>
        <taxon>Metazoa</taxon>
        <taxon>Chordata</taxon>
        <taxon>Craniata</taxon>
        <taxon>Vertebrata</taxon>
        <taxon>Euteleostomi</taxon>
        <taxon>Mammalia</taxon>
        <taxon>Eutheria</taxon>
        <taxon>Euarchontoglires</taxon>
        <taxon>Glires</taxon>
        <taxon>Rodentia</taxon>
        <taxon>Myomorpha</taxon>
        <taxon>Muroidea</taxon>
        <taxon>Muridae</taxon>
        <taxon>Murinae</taxon>
        <taxon>Rattus</taxon>
    </lineage>
</organism>
<feature type="signal peptide" evidence="3">
    <location>
        <begin position="1"/>
        <end position="24"/>
    </location>
</feature>
<feature type="chain" id="PRO_0000011572" description="Glutamate receptor ionotropic, NMDA 3B">
    <location>
        <begin position="25"/>
        <end position="1002"/>
    </location>
</feature>
<feature type="topological domain" description="Extracellular" evidence="9">
    <location>
        <begin position="25"/>
        <end position="574"/>
    </location>
</feature>
<feature type="transmembrane region" description="Helical" evidence="1">
    <location>
        <begin position="575"/>
        <end position="594"/>
    </location>
</feature>
<feature type="topological domain" description="Cytoplasmic" evidence="9">
    <location>
        <begin position="595"/>
        <end position="615"/>
    </location>
</feature>
<feature type="intramembrane region" description="Discontinuously helical" evidence="1">
    <location>
        <begin position="616"/>
        <end position="627"/>
    </location>
</feature>
<feature type="topological domain" description="Cytoplasmic" evidence="9">
    <location>
        <begin position="628"/>
        <end position="641"/>
    </location>
</feature>
<feature type="transmembrane region" description="Helical" evidence="1">
    <location>
        <begin position="642"/>
        <end position="661"/>
    </location>
</feature>
<feature type="topological domain" description="Extracellular" evidence="9">
    <location>
        <begin position="662"/>
        <end position="832"/>
    </location>
</feature>
<feature type="transmembrane region" description="Helical" evidence="1">
    <location>
        <begin position="833"/>
        <end position="848"/>
    </location>
</feature>
<feature type="topological domain" description="Cytoplasmic" evidence="9">
    <location>
        <begin position="849"/>
        <end position="1002"/>
    </location>
</feature>
<feature type="region of interest" description="Disordered" evidence="4">
    <location>
        <begin position="882"/>
        <end position="910"/>
    </location>
</feature>
<feature type="region of interest" description="Involved in the trafficking and surface expression of NMDARs" evidence="2">
    <location>
        <begin position="951"/>
        <end position="984"/>
    </location>
</feature>
<feature type="coiled-coil region" evidence="3">
    <location>
        <begin position="944"/>
        <end position="985"/>
    </location>
</feature>
<feature type="compositionally biased region" description="Basic and acidic residues" evidence="4">
    <location>
        <begin position="891"/>
        <end position="906"/>
    </location>
</feature>
<feature type="binding site" evidence="7 11">
    <location>
        <position position="531"/>
    </location>
    <ligand>
        <name>glycine</name>
        <dbReference type="ChEBI" id="CHEBI:57305"/>
    </ligand>
</feature>
<feature type="binding site" evidence="7 12">
    <location>
        <position position="533"/>
    </location>
    <ligand>
        <name>D-serine</name>
        <dbReference type="ChEBI" id="CHEBI:35247"/>
    </ligand>
</feature>
<feature type="binding site" evidence="7 11">
    <location>
        <position position="533"/>
    </location>
    <ligand>
        <name>glycine</name>
        <dbReference type="ChEBI" id="CHEBI:57305"/>
    </ligand>
</feature>
<feature type="binding site" evidence="7 12">
    <location>
        <position position="538"/>
    </location>
    <ligand>
        <name>D-serine</name>
        <dbReference type="ChEBI" id="CHEBI:35247"/>
    </ligand>
</feature>
<feature type="binding site" evidence="7 11">
    <location>
        <position position="538"/>
    </location>
    <ligand>
        <name>glycine</name>
        <dbReference type="ChEBI" id="CHEBI:57305"/>
    </ligand>
</feature>
<feature type="binding site" evidence="7 12">
    <location>
        <position position="701"/>
    </location>
    <ligand>
        <name>D-serine</name>
        <dbReference type="ChEBI" id="CHEBI:35247"/>
    </ligand>
</feature>
<feature type="binding site" evidence="7 11">
    <location>
        <position position="701"/>
    </location>
    <ligand>
        <name>glycine</name>
        <dbReference type="ChEBI" id="CHEBI:57305"/>
    </ligand>
</feature>
<feature type="binding site" evidence="7 12">
    <location>
        <position position="702"/>
    </location>
    <ligand>
        <name>D-serine</name>
        <dbReference type="ChEBI" id="CHEBI:35247"/>
    </ligand>
</feature>
<feature type="binding site" evidence="7 12">
    <location>
        <position position="745"/>
    </location>
    <ligand>
        <name>D-serine</name>
        <dbReference type="ChEBI" id="CHEBI:35247"/>
    </ligand>
</feature>
<feature type="binding site" evidence="7 11">
    <location>
        <position position="745"/>
    </location>
    <ligand>
        <name>glycine</name>
        <dbReference type="ChEBI" id="CHEBI:57305"/>
    </ligand>
</feature>
<feature type="glycosylation site" description="N-linked (GlcNAc...) asparagine" evidence="3">
    <location>
        <position position="69"/>
    </location>
</feature>
<feature type="glycosylation site" description="N-linked (GlcNAc...) asparagine" evidence="3">
    <location>
        <position position="212"/>
    </location>
</feature>
<feature type="glycosylation site" description="N-linked (GlcNAc...) asparagine" evidence="3">
    <location>
        <position position="344"/>
    </location>
</feature>
<feature type="glycosylation site" description="N-linked (GlcNAc...) asparagine" evidence="3">
    <location>
        <position position="451"/>
    </location>
</feature>
<feature type="glycosylation site" description="N-linked (GlcNAc...) asparagine" evidence="3">
    <location>
        <position position="465"/>
    </location>
</feature>
<feature type="glycosylation site" description="N-linked (GlcNAc...) asparagine" evidence="3">
    <location>
        <position position="786"/>
    </location>
</feature>
<feature type="disulfide bond" evidence="7 11 12">
    <location>
        <begin position="439"/>
        <end position="475"/>
    </location>
</feature>
<feature type="disulfide bond" evidence="7 11 12">
    <location>
        <begin position="445"/>
        <end position="476"/>
    </location>
</feature>
<feature type="strand" evidence="13">
    <location>
        <begin position="416"/>
        <end position="421"/>
    </location>
</feature>
<feature type="turn" evidence="13">
    <location>
        <begin position="425"/>
        <end position="427"/>
    </location>
</feature>
<feature type="strand" evidence="13">
    <location>
        <begin position="428"/>
        <end position="432"/>
    </location>
</feature>
<feature type="strand" evidence="13">
    <location>
        <begin position="440"/>
        <end position="446"/>
    </location>
</feature>
<feature type="helix" evidence="13">
    <location>
        <begin position="453"/>
        <end position="465"/>
    </location>
</feature>
<feature type="helix" evidence="13">
    <location>
        <begin position="470"/>
        <end position="472"/>
    </location>
</feature>
<feature type="strand" evidence="13">
    <location>
        <begin position="473"/>
        <end position="478"/>
    </location>
</feature>
<feature type="helix" evidence="13">
    <location>
        <begin position="479"/>
        <end position="491"/>
    </location>
</feature>
<feature type="strand" evidence="13">
    <location>
        <begin position="494"/>
        <end position="499"/>
    </location>
</feature>
<feature type="helix" evidence="13">
    <location>
        <begin position="515"/>
        <end position="521"/>
    </location>
</feature>
<feature type="strand" evidence="13">
    <location>
        <begin position="526"/>
        <end position="528"/>
    </location>
</feature>
<feature type="helix" evidence="13">
    <location>
        <begin position="536"/>
        <end position="539"/>
    </location>
</feature>
<feature type="strand" evidence="13">
    <location>
        <begin position="542"/>
        <end position="544"/>
    </location>
</feature>
<feature type="strand" evidence="13">
    <location>
        <begin position="548"/>
        <end position="558"/>
    </location>
</feature>
<feature type="helix" evidence="13">
    <location>
        <begin position="683"/>
        <end position="686"/>
    </location>
</feature>
<feature type="helix" evidence="13">
    <location>
        <begin position="701"/>
        <end position="709"/>
    </location>
</feature>
<feature type="helix" evidence="13">
    <location>
        <begin position="711"/>
        <end position="717"/>
    </location>
</feature>
<feature type="strand" evidence="13">
    <location>
        <begin position="722"/>
        <end position="724"/>
    </location>
</feature>
<feature type="helix" evidence="13">
    <location>
        <begin position="725"/>
        <end position="733"/>
    </location>
</feature>
<feature type="strand" evidence="13">
    <location>
        <begin position="734"/>
        <end position="736"/>
    </location>
</feature>
<feature type="strand" evidence="13">
    <location>
        <begin position="740"/>
        <end position="745"/>
    </location>
</feature>
<feature type="helix" evidence="13">
    <location>
        <begin position="746"/>
        <end position="755"/>
    </location>
</feature>
<feature type="strand" evidence="13">
    <location>
        <begin position="761"/>
        <end position="773"/>
    </location>
</feature>
<feature type="strand" evidence="13">
    <location>
        <begin position="776"/>
        <end position="778"/>
    </location>
</feature>
<feature type="helix" evidence="13">
    <location>
        <begin position="784"/>
        <end position="796"/>
    </location>
</feature>
<feature type="helix" evidence="13">
    <location>
        <begin position="799"/>
        <end position="807"/>
    </location>
</feature>
<comment type="function">
    <text evidence="2 6 7">Component of a non-conventional N-methyl-D-aspartate (NMDA) receptors (NMDARs) that function as heterotetrameric, ligand-gated cation channels with low calcium permeability and low voltage-dependent block by Mg(2+) (PubMed:11823786). Forms glutamatergic receptor complexes with GluN1 and GluN2 subunits which are activated by glycine binding to the GluN1 and GluN3 subunits and L-glutamate binding to GluN2 subunits (By similarity). Forms excitatory glycinergic receptor complexes with GluN1 alone which are activated by glycine binding to the GluN1 and GluN3 subunits (PubMed:11823786). GluN3B subunit also binds D-serine and, in the absence of glycine, activates glycinergic receptor complexes, but with lower efficacy than glycine (PubMed:11823786, PubMed:18636091). Each GluN3 subunit confers differential attributes to channel properties, including activation, deactivation and desensitization kinetics, pH sensitivity, Ca2(+) permeability, and binding to allosteric modulators (By similarity).</text>
</comment>
<comment type="catalytic activity">
    <reaction evidence="6">
        <text>Ca(2+)(in) = Ca(2+)(out)</text>
        <dbReference type="Rhea" id="RHEA:29671"/>
        <dbReference type="ChEBI" id="CHEBI:29108"/>
    </reaction>
</comment>
<comment type="catalytic activity">
    <reaction evidence="6">
        <text>Na(+)(in) = Na(+)(out)</text>
        <dbReference type="Rhea" id="RHEA:34963"/>
        <dbReference type="ChEBI" id="CHEBI:29101"/>
    </reaction>
</comment>
<comment type="activity regulation">
    <text evidence="6">Excitatory glycine receptors are inhibited by D-serine at a concentrion of 100uM.</text>
</comment>
<comment type="subunit">
    <text evidence="2 9">Forms heterotetrameric channels that contain at least two GluN1 subunits and at least a combination of one GluN2 and one GluN3 subunits (in vitro) (By similarity). Forms heterotetrameric channels composed of two GluN1/zeta subunits (GRIN1), and two identical GluN3 subunits (GRIN3A or GRIN3B) (in vitro) (Probable). Does not form functional homomeric channels (By similarity).</text>
</comment>
<comment type="subcellular location">
    <subcellularLocation>
        <location evidence="2">Cell membrane</location>
        <topology evidence="1">Multi-pass membrane protein</topology>
    </subcellularLocation>
    <subcellularLocation>
        <location evidence="2">Postsynaptic cell membrane</location>
    </subcellularLocation>
    <text evidence="2">Requires the presence of GRIN1 to be targeted at the plasma membrane.</text>
</comment>
<comment type="tissue specificity">
    <text evidence="5 6">Expressed in the hippocampus, the corpus callosum, in the facial and trigeminal nuclei of the brainstem and the ventral horn of the spinal cord.</text>
</comment>
<comment type="similarity">
    <text evidence="9">Belongs to the glutamate-gated ion channel (TC 1.A.10.1) family. NR3B/GRIN3B subfamily.</text>
</comment>
<protein>
    <recommendedName>
        <fullName evidence="9">Glutamate receptor ionotropic, NMDA 3B</fullName>
        <shortName>GluN3B</shortName>
    </recommendedName>
    <alternativeName>
        <fullName>N-methyl-D-aspartate receptor subtype 3B</fullName>
        <shortName>NMDAR3B</shortName>
        <shortName evidence="8">NR3B</shortName>
    </alternativeName>
</protein>
<reference key="1">
    <citation type="journal article" date="2002" name="Nature">
        <title>Excitatory glycine receptors containing the NR3 family of NMDA receptor subunits.</title>
        <authorList>
            <person name="Chatterton J.E."/>
            <person name="Awobuluyi M."/>
            <person name="Premkumar L.S."/>
            <person name="Takahashi H."/>
            <person name="Talantova M."/>
            <person name="Shin Y."/>
            <person name="Cui J."/>
            <person name="Tu S."/>
            <person name="Sevarino K.K.A."/>
            <person name="Nakanishi N."/>
            <person name="Tong G."/>
            <person name="Lipton S.A."/>
            <person name="Zhang D."/>
        </authorList>
    </citation>
    <scope>NUCLEOTIDE SEQUENCE [MRNA]</scope>
    <scope>FUNCTION</scope>
    <scope>TRANSPORTER ACTIVITY</scope>
    <scope>ACTIVITY REGULATION</scope>
    <scope>TISSUE SPECIFICITY</scope>
    <source>
        <tissue>Brain</tissue>
    </source>
</reference>
<reference key="2">
    <citation type="submission" date="2002-04" db="EMBL/GenBank/DDBJ databases">
        <authorList>
            <person name="Chatterton J.E."/>
            <person name="Awobuluyi M."/>
            <person name="Cui J."/>
            <person name="Sevarino K.K.A."/>
            <person name="Lipton S.A."/>
            <person name="Zhang D."/>
        </authorList>
    </citation>
    <scope>SEQUENCE REVISION</scope>
</reference>
<reference key="3">
    <citation type="journal article" date="2001" name="Genomics">
        <title>Nucleotide sequence, genomic organization, and chromosomal localization of genes encoding the human NMDA receptor subunits NR3A and NR3B.</title>
        <authorList>
            <person name="Andersson O."/>
            <person name="Stenqvist A."/>
            <person name="Attersand A."/>
            <person name="von Euler G."/>
        </authorList>
    </citation>
    <scope>IDENTIFICATION</scope>
    <scope>TISSUE SPECIFICITY</scope>
</reference>
<reference evidence="11 12" key="4">
    <citation type="journal article" date="2008" name="EMBO J.">
        <title>Molecular mechanism of ligand recognition by NR3 subtype glutamate receptors.</title>
        <authorList>
            <person name="Yao Y."/>
            <person name="Harrison C.B."/>
            <person name="Freddolino P.L."/>
            <person name="Schulten K."/>
            <person name="Mayer M.L."/>
        </authorList>
    </citation>
    <scope>X-RAY CRYSTALLOGRAPHY (1.58 ANGSTROMS) OF 413-815 IN COMPLEX WITH D-SERINE AND GLYCINE</scope>
    <scope>DISULFIDE BONDS</scope>
    <scope>FUNCTION</scope>
</reference>
<accession>Q8VHN2</accession>
<dbReference type="EMBL" id="AF440691">
    <property type="protein sequence ID" value="AAL69893.2"/>
    <property type="molecule type" value="mRNA"/>
</dbReference>
<dbReference type="RefSeq" id="NP_579842.2">
    <property type="nucleotide sequence ID" value="NM_133308.2"/>
</dbReference>
<dbReference type="PDB" id="2RCA">
    <property type="method" value="X-ray"/>
    <property type="resolution" value="1.58 A"/>
    <property type="chains" value="A/B=413-560, A/B=676-815"/>
</dbReference>
<dbReference type="PDB" id="2RCB">
    <property type="method" value="X-ray"/>
    <property type="resolution" value="1.62 A"/>
    <property type="chains" value="A/B=413-560, A/B=676-815"/>
</dbReference>
<dbReference type="PDBsum" id="2RCA"/>
<dbReference type="PDBsum" id="2RCB"/>
<dbReference type="SMR" id="Q8VHN2"/>
<dbReference type="FunCoup" id="Q8VHN2">
    <property type="interactions" value="27"/>
</dbReference>
<dbReference type="STRING" id="10116.ENSRNOP00000017064"/>
<dbReference type="BindingDB" id="Q8VHN2"/>
<dbReference type="ChEMBL" id="CHEMBL1907608"/>
<dbReference type="ChEMBL" id="CHEMBL2096669"/>
<dbReference type="ChEMBL" id="CHEMBL4524129"/>
<dbReference type="DrugCentral" id="Q8VHN2"/>
<dbReference type="GlyCosmos" id="Q8VHN2">
    <property type="glycosylation" value="6 sites, No reported glycans"/>
</dbReference>
<dbReference type="GlyGen" id="Q8VHN2">
    <property type="glycosylation" value="7 sites"/>
</dbReference>
<dbReference type="PhosphoSitePlus" id="Q8VHN2"/>
<dbReference type="PaxDb" id="10116-ENSRNOP00000017064"/>
<dbReference type="GeneID" id="170796"/>
<dbReference type="KEGG" id="rno:170796"/>
<dbReference type="UCSC" id="RGD:621705">
    <property type="organism name" value="rat"/>
</dbReference>
<dbReference type="AGR" id="RGD:621705"/>
<dbReference type="CTD" id="116444"/>
<dbReference type="RGD" id="621705">
    <property type="gene designation" value="Grin3b"/>
</dbReference>
<dbReference type="eggNOG" id="KOG1053">
    <property type="taxonomic scope" value="Eukaryota"/>
</dbReference>
<dbReference type="InParanoid" id="Q8VHN2"/>
<dbReference type="OrthoDB" id="76109at9989"/>
<dbReference type="PhylomeDB" id="Q8VHN2"/>
<dbReference type="EvolutionaryTrace" id="Q8VHN2"/>
<dbReference type="PRO" id="PR:Q8VHN2"/>
<dbReference type="Proteomes" id="UP000002494">
    <property type="component" value="Unplaced"/>
</dbReference>
<dbReference type="GO" id="GO:0005789">
    <property type="term" value="C:endoplasmic reticulum membrane"/>
    <property type="evidence" value="ECO:0000304"/>
    <property type="project" value="Reactome"/>
</dbReference>
<dbReference type="GO" id="GO:0098686">
    <property type="term" value="C:hippocampal mossy fiber to CA3 synapse"/>
    <property type="evidence" value="ECO:0000314"/>
    <property type="project" value="SynGO"/>
</dbReference>
<dbReference type="GO" id="GO:0043025">
    <property type="term" value="C:neuronal cell body"/>
    <property type="evidence" value="ECO:0000266"/>
    <property type="project" value="RGD"/>
</dbReference>
<dbReference type="GO" id="GO:0098878">
    <property type="term" value="C:neurotransmitter receptor complex"/>
    <property type="evidence" value="ECO:0000266"/>
    <property type="project" value="RGD"/>
</dbReference>
<dbReference type="GO" id="GO:0017146">
    <property type="term" value="C:NMDA selective glutamate receptor complex"/>
    <property type="evidence" value="ECO:0000314"/>
    <property type="project" value="RGD"/>
</dbReference>
<dbReference type="GO" id="GO:0005886">
    <property type="term" value="C:plasma membrane"/>
    <property type="evidence" value="ECO:0000318"/>
    <property type="project" value="GO_Central"/>
</dbReference>
<dbReference type="GO" id="GO:0098839">
    <property type="term" value="C:postsynaptic density membrane"/>
    <property type="evidence" value="ECO:0000314"/>
    <property type="project" value="SynGO"/>
</dbReference>
<dbReference type="GO" id="GO:0045211">
    <property type="term" value="C:postsynaptic membrane"/>
    <property type="evidence" value="ECO:0000314"/>
    <property type="project" value="UniProtKB"/>
</dbReference>
<dbReference type="GO" id="GO:0048787">
    <property type="term" value="C:presynaptic active zone membrane"/>
    <property type="evidence" value="ECO:0000314"/>
    <property type="project" value="SynGO"/>
</dbReference>
<dbReference type="GO" id="GO:0042734">
    <property type="term" value="C:presynaptic membrane"/>
    <property type="evidence" value="ECO:0000314"/>
    <property type="project" value="UniProtKB"/>
</dbReference>
<dbReference type="GO" id="GO:0008066">
    <property type="term" value="F:glutamate receptor activity"/>
    <property type="evidence" value="ECO:0000318"/>
    <property type="project" value="GO_Central"/>
</dbReference>
<dbReference type="GO" id="GO:0016594">
    <property type="term" value="F:glycine binding"/>
    <property type="evidence" value="ECO:0000314"/>
    <property type="project" value="RGD"/>
</dbReference>
<dbReference type="GO" id="GO:0099507">
    <property type="term" value="F:ligand-gated monoatomic ion channel activity involved in regulation of presynaptic membrane potential"/>
    <property type="evidence" value="ECO:0000266"/>
    <property type="project" value="RGD"/>
</dbReference>
<dbReference type="GO" id="GO:0005261">
    <property type="term" value="F:monoatomic cation channel activity"/>
    <property type="evidence" value="ECO:0000314"/>
    <property type="project" value="RGD"/>
</dbReference>
<dbReference type="GO" id="GO:0030594">
    <property type="term" value="F:neurotransmitter receptor activity"/>
    <property type="evidence" value="ECO:0000314"/>
    <property type="project" value="RGD"/>
</dbReference>
<dbReference type="GO" id="GO:0022824">
    <property type="term" value="F:transmitter-gated monoatomic ion channel activity"/>
    <property type="evidence" value="ECO:0000314"/>
    <property type="project" value="UniProtKB"/>
</dbReference>
<dbReference type="GO" id="GO:1904315">
    <property type="term" value="F:transmitter-gated monoatomic ion channel activity involved in regulation of postsynaptic membrane potential"/>
    <property type="evidence" value="ECO:0000318"/>
    <property type="project" value="GO_Central"/>
</dbReference>
<dbReference type="GO" id="GO:0070588">
    <property type="term" value="P:calcium ion transmembrane transport"/>
    <property type="evidence" value="ECO:0007669"/>
    <property type="project" value="GOC"/>
</dbReference>
<dbReference type="GO" id="GO:1905430">
    <property type="term" value="P:cellular response to glycine"/>
    <property type="evidence" value="ECO:0000314"/>
    <property type="project" value="RGD"/>
</dbReference>
<dbReference type="GO" id="GO:0035235">
    <property type="term" value="P:ionotropic glutamate receptor signaling pathway"/>
    <property type="evidence" value="ECO:0000314"/>
    <property type="project" value="RGD"/>
</dbReference>
<dbReference type="GO" id="GO:0050804">
    <property type="term" value="P:modulation of chemical synaptic transmission"/>
    <property type="evidence" value="ECO:0000318"/>
    <property type="project" value="GO_Central"/>
</dbReference>
<dbReference type="GO" id="GO:0098655">
    <property type="term" value="P:monoatomic cation transmembrane transport"/>
    <property type="evidence" value="ECO:0000314"/>
    <property type="project" value="UniProtKB"/>
</dbReference>
<dbReference type="GO" id="GO:0051205">
    <property type="term" value="P:protein insertion into membrane"/>
    <property type="evidence" value="ECO:0000266"/>
    <property type="project" value="RGD"/>
</dbReference>
<dbReference type="GO" id="GO:0051924">
    <property type="term" value="P:regulation of calcium ion transport"/>
    <property type="evidence" value="ECO:0000266"/>
    <property type="project" value="RGD"/>
</dbReference>
<dbReference type="GO" id="GO:0048167">
    <property type="term" value="P:regulation of synaptic plasticity"/>
    <property type="evidence" value="ECO:0000250"/>
    <property type="project" value="UniProtKB"/>
</dbReference>
<dbReference type="GO" id="GO:0035249">
    <property type="term" value="P:synaptic transmission, glutamatergic"/>
    <property type="evidence" value="ECO:0000318"/>
    <property type="project" value="GO_Central"/>
</dbReference>
<dbReference type="CDD" id="cd06377">
    <property type="entry name" value="PBP1_iGluR_NMDA_NR3"/>
    <property type="match status" value="1"/>
</dbReference>
<dbReference type="CDD" id="cd13720">
    <property type="entry name" value="PBP2_iGluR_NMDA_Nr3"/>
    <property type="match status" value="1"/>
</dbReference>
<dbReference type="FunFam" id="3.40.190.10:FF:000078">
    <property type="entry name" value="glutamate receptor ionotropic, NMDA 3B"/>
    <property type="match status" value="1"/>
</dbReference>
<dbReference type="FunFam" id="3.40.190.10:FF:000045">
    <property type="entry name" value="Putative glutamate receptor ionotropic NMDA 3A"/>
    <property type="match status" value="1"/>
</dbReference>
<dbReference type="Gene3D" id="3.40.50.2300">
    <property type="match status" value="2"/>
</dbReference>
<dbReference type="Gene3D" id="3.40.190.10">
    <property type="entry name" value="Periplasmic binding protein-like II"/>
    <property type="match status" value="3"/>
</dbReference>
<dbReference type="InterPro" id="IPR019594">
    <property type="entry name" value="Glu/Gly-bd"/>
</dbReference>
<dbReference type="InterPro" id="IPR001508">
    <property type="entry name" value="Iono_Glu_rcpt_met"/>
</dbReference>
<dbReference type="InterPro" id="IPR015683">
    <property type="entry name" value="Ionotropic_Glu_rcpt"/>
</dbReference>
<dbReference type="InterPro" id="IPR001320">
    <property type="entry name" value="Iontro_rcpt_C"/>
</dbReference>
<dbReference type="InterPro" id="IPR028082">
    <property type="entry name" value="Peripla_BP_I"/>
</dbReference>
<dbReference type="PANTHER" id="PTHR18966">
    <property type="entry name" value="IONOTROPIC GLUTAMATE RECEPTOR"/>
    <property type="match status" value="1"/>
</dbReference>
<dbReference type="Pfam" id="PF00060">
    <property type="entry name" value="Lig_chan"/>
    <property type="match status" value="1"/>
</dbReference>
<dbReference type="Pfam" id="PF10613">
    <property type="entry name" value="Lig_chan-Glu_bd"/>
    <property type="match status" value="1"/>
</dbReference>
<dbReference type="PRINTS" id="PR00177">
    <property type="entry name" value="NMDARECEPTOR"/>
</dbReference>
<dbReference type="SMART" id="SM00918">
    <property type="entry name" value="Lig_chan-Glu_bd"/>
    <property type="match status" value="1"/>
</dbReference>
<dbReference type="SMART" id="SM00079">
    <property type="entry name" value="PBPe"/>
    <property type="match status" value="1"/>
</dbReference>
<dbReference type="SUPFAM" id="SSF53822">
    <property type="entry name" value="Periplasmic binding protein-like I"/>
    <property type="match status" value="1"/>
</dbReference>
<dbReference type="SUPFAM" id="SSF53850">
    <property type="entry name" value="Periplasmic binding protein-like II"/>
    <property type="match status" value="1"/>
</dbReference>
<evidence type="ECO:0000250" key="1">
    <source>
        <dbReference type="UniProtKB" id="Q13224"/>
    </source>
</evidence>
<evidence type="ECO:0000250" key="2">
    <source>
        <dbReference type="UniProtKB" id="Q91ZU9"/>
    </source>
</evidence>
<evidence type="ECO:0000255" key="3"/>
<evidence type="ECO:0000256" key="4">
    <source>
        <dbReference type="SAM" id="MobiDB-lite"/>
    </source>
</evidence>
<evidence type="ECO:0000269" key="5">
    <source>
    </source>
</evidence>
<evidence type="ECO:0000269" key="6">
    <source>
    </source>
</evidence>
<evidence type="ECO:0000269" key="7">
    <source>
    </source>
</evidence>
<evidence type="ECO:0000303" key="8">
    <source>
    </source>
</evidence>
<evidence type="ECO:0000305" key="9"/>
<evidence type="ECO:0000312" key="10">
    <source>
        <dbReference type="RGD" id="621705"/>
    </source>
</evidence>
<evidence type="ECO:0007744" key="11">
    <source>
        <dbReference type="PDB" id="2RCA"/>
    </source>
</evidence>
<evidence type="ECO:0007744" key="12">
    <source>
        <dbReference type="PDB" id="2RCB"/>
    </source>
</evidence>
<evidence type="ECO:0007829" key="13">
    <source>
        <dbReference type="PDB" id="2RCA"/>
    </source>
</evidence>
<proteinExistence type="evidence at protein level"/>
<keyword id="KW-0002">3D-structure</keyword>
<keyword id="KW-0106">Calcium</keyword>
<keyword id="KW-1003">Cell membrane</keyword>
<keyword id="KW-0175">Coiled coil</keyword>
<keyword id="KW-1015">Disulfide bond</keyword>
<keyword id="KW-0325">Glycoprotein</keyword>
<keyword id="KW-0407">Ion channel</keyword>
<keyword id="KW-0406">Ion transport</keyword>
<keyword id="KW-1071">Ligand-gated ion channel</keyword>
<keyword id="KW-0460">Magnesium</keyword>
<keyword id="KW-0472">Membrane</keyword>
<keyword id="KW-0628">Postsynaptic cell membrane</keyword>
<keyword id="KW-0675">Receptor</keyword>
<keyword id="KW-1185">Reference proteome</keyword>
<keyword id="KW-0732">Signal</keyword>
<keyword id="KW-0770">Synapse</keyword>
<keyword id="KW-0812">Transmembrane</keyword>
<keyword id="KW-1133">Transmembrane helix</keyword>
<keyword id="KW-0813">Transport</keyword>
<sequence length="1002" mass="109158">MESVRTLWLSVALALAVGSRVVRGHPQPCRVPTRAGASVRLAALLPRAPAARARVLAALATPAPRLPHNLSLELVAVASPTRDPASLARGLCQVLAPPGVVASIAFPEARPELRLLQFLAAATETPVVSVLRREVRTALGAPTPFHLQLDWASPLETILDVLVSLVRAHAWEDIALVLCRVRDPGSLVTLWTNHASQAPKFVLDLSRLDSRNDSLRAGLALLGALEGGGTPVPAAVLLGCSTARAHEVLEAAPPGPQWLLGTPLPAEALPTTGLPPGVLALGETEQHSLEAVVHDMVELVAQALSSMALVHPERALLPAVVNCDDLKTGGSEATGRTLARFLGNTSFQGRTGAVWVTGSSQVHVSRHFKVWSLRRDPLGAPAWATVGSWQDGQLDFQPGAAALRVPSPSGTQARPKLRVVTLVEHPFVFTRESDEDGQCPAGQLCLDPGTNDSARLDALFAALVNGSVPRTLRRCCYGYCIDLLERLAEDLAFDFELYIVGDGKYGALRDGRWTGLVGDLLAGRAHMAVTSFSINSARSQVVDFTSPFFSTSLGIMVRTRDTASPIGAFMWPLHWSMWVGVFAALHLTALFLTLYEWRSPYGLTPRGRNRGTVFSYSSALNLCYAILFGRTVSSKTPKCPTGRFLMNLWAIFCLLVLSSYTANLAAVMVGDKTFEELSGIHDPKLHHPSQGFRFGTVWESSAEAYIKASFPEMHAHMRRHSAPTTPHGVAMLTSDPPKLNAFIMDKSLLDYEVSIDADCKLLTVGKPFAIEGYGIGLPQNSPLTSNLSEFISRYKSSGFIDLLHDKWYKMVPCGKRVFAVTETLQMGVYHFSGLFVLLCLGLGSALLTSLGEHVFYRLVLPRIRRGNKLQYWLHTSQKIHRALNTGPPEGQQERAEQERSGPKDELPATDGAGRWRRVRRAVERERRVRFLLEPGEAGGDRPWLCSNGPGLQAELRELELRIEAARERLRSALLRRGELRALLGDGTRLRPLRLLHAAPAES</sequence>
<gene>
    <name evidence="10" type="primary">Grin3b</name>
</gene>
<name>NMD3B_RAT</name>